<sequence>DKYIALGEWAGCFGIKEKDIDKDLVI</sequence>
<organism>
    <name type="scientific">Neovison vison</name>
    <name type="common">American mink</name>
    <name type="synonym">Mustela vison</name>
    <dbReference type="NCBI Taxonomy" id="452646"/>
    <lineage>
        <taxon>Eukaryota</taxon>
        <taxon>Metazoa</taxon>
        <taxon>Chordata</taxon>
        <taxon>Craniata</taxon>
        <taxon>Vertebrata</taxon>
        <taxon>Euteleostomi</taxon>
        <taxon>Mammalia</taxon>
        <taxon>Eutheria</taxon>
        <taxon>Laurasiatheria</taxon>
        <taxon>Carnivora</taxon>
        <taxon>Caniformia</taxon>
        <taxon>Musteloidea</taxon>
        <taxon>Mustelidae</taxon>
        <taxon>Mustelinae</taxon>
        <taxon>Neogale</taxon>
    </lineage>
</organism>
<gene>
    <name type="primary">SPARC</name>
</gene>
<accession>P36379</accession>
<evidence type="ECO:0000250" key="1"/>
<evidence type="ECO:0000305" key="2"/>
<keyword id="KW-0084">Basement membrane</keyword>
<keyword id="KW-0106">Calcium</keyword>
<keyword id="KW-0186">Copper</keyword>
<keyword id="KW-0272">Extracellular matrix</keyword>
<keyword id="KW-1185">Reference proteome</keyword>
<keyword id="KW-0964">Secreted</keyword>
<comment type="function">
    <text evidence="1">Appears to regulate cell growth through interactions with the extracellular matrix and cytokines. Binds calcium and copper, several types of collagen, albumin, thrombospondin, PDGF and cell membranes. There are two calcium binding sites; an acidic domain that binds 5 to 8 Ca(2+) with a low affinity and an EF-hand loop that binds a Ca(2+) ion with a high affinity (By similarity).</text>
</comment>
<comment type="subcellular location">
    <subcellularLocation>
        <location evidence="1">Secreted</location>
        <location evidence="1">Extracellular space</location>
        <location evidence="1">Extracellular matrix</location>
        <location evidence="1">Basement membrane</location>
    </subcellularLocation>
    <text evidence="1">In or around the basement membrane.</text>
</comment>
<comment type="similarity">
    <text evidence="2">Belongs to the SPARC family.</text>
</comment>
<reference key="1">
    <citation type="submission" date="1993-08" db="EMBL/GenBank/DDBJ databases">
        <authorList>
            <person name="Ralph D."/>
            <person name="McClelland M."/>
            <person name="Welsh J."/>
        </authorList>
    </citation>
    <scope>NUCLEOTIDE SEQUENCE [MRNA]</scope>
    <source>
        <tissue>Lung</tissue>
    </source>
</reference>
<feature type="chain" id="PRO_0000160589" description="SPARC">
    <location>
        <begin position="1" status="less than"/>
        <end position="26"/>
    </location>
</feature>
<feature type="non-terminal residue">
    <location>
        <position position="1"/>
    </location>
</feature>
<name>SPRC_NEOVI</name>
<dbReference type="EMBL" id="U00596">
    <property type="protein sequence ID" value="AAA16139.1"/>
    <property type="molecule type" value="mRNA"/>
</dbReference>
<dbReference type="SMR" id="P36379"/>
<dbReference type="Proteomes" id="UP000694425">
    <property type="component" value="Unplaced"/>
</dbReference>
<dbReference type="GO" id="GO:0005604">
    <property type="term" value="C:basement membrane"/>
    <property type="evidence" value="ECO:0007669"/>
    <property type="project" value="UniProtKB-SubCell"/>
</dbReference>
<dbReference type="GO" id="GO:0005576">
    <property type="term" value="C:extracellular region"/>
    <property type="evidence" value="ECO:0007669"/>
    <property type="project" value="UniProtKB-KW"/>
</dbReference>
<protein>
    <recommendedName>
        <fullName>SPARC</fullName>
    </recommendedName>
    <alternativeName>
        <fullName>Basement-membrane protein 40</fullName>
        <shortName>BM-40</shortName>
    </alternativeName>
    <alternativeName>
        <fullName>Osteonectin</fullName>
        <shortName>ON</shortName>
    </alternativeName>
    <alternativeName>
        <fullName>Secreted protein acidic and rich in cysteine</fullName>
    </alternativeName>
</protein>
<proteinExistence type="evidence at transcript level"/>